<accession>Q6GP51</accession>
<name>SMCO4_XENLA</name>
<keyword id="KW-0175">Coiled coil</keyword>
<keyword id="KW-0472">Membrane</keyword>
<keyword id="KW-1185">Reference proteome</keyword>
<keyword id="KW-0812">Transmembrane</keyword>
<keyword id="KW-1133">Transmembrane helix</keyword>
<organism>
    <name type="scientific">Xenopus laevis</name>
    <name type="common">African clawed frog</name>
    <dbReference type="NCBI Taxonomy" id="8355"/>
    <lineage>
        <taxon>Eukaryota</taxon>
        <taxon>Metazoa</taxon>
        <taxon>Chordata</taxon>
        <taxon>Craniata</taxon>
        <taxon>Vertebrata</taxon>
        <taxon>Euteleostomi</taxon>
        <taxon>Amphibia</taxon>
        <taxon>Batrachia</taxon>
        <taxon>Anura</taxon>
        <taxon>Pipoidea</taxon>
        <taxon>Pipidae</taxon>
        <taxon>Xenopodinae</taxon>
        <taxon>Xenopus</taxon>
        <taxon>Xenopus</taxon>
    </lineage>
</organism>
<sequence>MRQLKGKPKKETSKDKKERKQAMQEARQQITTVVLPTLAVVVALIVVFVYVATRPNTIE</sequence>
<feature type="chain" id="PRO_0000293701" description="Single-pass membrane and coiled-coil domain-containing protein 4">
    <location>
        <begin position="1"/>
        <end position="59"/>
    </location>
</feature>
<feature type="transmembrane region" description="Helical" evidence="1">
    <location>
        <begin position="32"/>
        <end position="52"/>
    </location>
</feature>
<feature type="region of interest" description="Disordered" evidence="2">
    <location>
        <begin position="1"/>
        <end position="23"/>
    </location>
</feature>
<feature type="coiled-coil region" evidence="1">
    <location>
        <begin position="9"/>
        <end position="31"/>
    </location>
</feature>
<feature type="compositionally biased region" description="Basic and acidic residues" evidence="2">
    <location>
        <begin position="9"/>
        <end position="22"/>
    </location>
</feature>
<gene>
    <name type="primary">smco4</name>
</gene>
<comment type="subcellular location">
    <subcellularLocation>
        <location evidence="3">Membrane</location>
        <topology evidence="3">Single-pass membrane protein</topology>
    </subcellularLocation>
</comment>
<comment type="similarity">
    <text evidence="3">Belongs to the SMCO4 family.</text>
</comment>
<evidence type="ECO:0000255" key="1"/>
<evidence type="ECO:0000256" key="2">
    <source>
        <dbReference type="SAM" id="MobiDB-lite"/>
    </source>
</evidence>
<evidence type="ECO:0000305" key="3"/>
<reference key="1">
    <citation type="submission" date="2004-06" db="EMBL/GenBank/DDBJ databases">
        <authorList>
            <consortium name="NIH - Xenopus Gene Collection (XGC) project"/>
        </authorList>
    </citation>
    <scope>NUCLEOTIDE SEQUENCE [LARGE SCALE MRNA]</scope>
    <source>
        <tissue>Egg</tissue>
        <tissue>Spleen</tissue>
    </source>
</reference>
<dbReference type="EMBL" id="BC073293">
    <property type="protein sequence ID" value="AAH73293.1"/>
    <property type="molecule type" value="mRNA"/>
</dbReference>
<dbReference type="EMBL" id="BC097831">
    <property type="protein sequence ID" value="AAH97831.1"/>
    <property type="molecule type" value="mRNA"/>
</dbReference>
<dbReference type="RefSeq" id="NP_001085752.1">
    <property type="nucleotide sequence ID" value="NM_001092283.1"/>
</dbReference>
<dbReference type="SMR" id="Q6GP51"/>
<dbReference type="DNASU" id="444179"/>
<dbReference type="GeneID" id="444179"/>
<dbReference type="AGR" id="Xenbase:XB-GENE-5724601"/>
<dbReference type="CTD" id="444179"/>
<dbReference type="Xenbase" id="XB-GENE-5724601">
    <property type="gene designation" value="smco4.L"/>
</dbReference>
<dbReference type="OMA" id="FFIYANT"/>
<dbReference type="Proteomes" id="UP000186698">
    <property type="component" value="Unplaced"/>
</dbReference>
<dbReference type="Bgee" id="444179">
    <property type="expression patterns" value="Expressed in egg cell and 19 other cell types or tissues"/>
</dbReference>
<dbReference type="GO" id="GO:0016020">
    <property type="term" value="C:membrane"/>
    <property type="evidence" value="ECO:0007669"/>
    <property type="project" value="UniProtKB-SubCell"/>
</dbReference>
<dbReference type="InterPro" id="IPR027960">
    <property type="entry name" value="DUF4519"/>
</dbReference>
<dbReference type="PANTHER" id="PTHR34644">
    <property type="entry name" value="SINGLE-PASS MEMBRANE AND COILED-COIL DOMAIN-CONTAINING PROTEIN 4"/>
    <property type="match status" value="1"/>
</dbReference>
<dbReference type="PANTHER" id="PTHR34644:SF2">
    <property type="entry name" value="SINGLE-PASS MEMBRANE AND COILED-COIL DOMAIN-CONTAINING PROTEIN 4"/>
    <property type="match status" value="1"/>
</dbReference>
<dbReference type="Pfam" id="PF15012">
    <property type="entry name" value="DUF4519"/>
    <property type="match status" value="1"/>
</dbReference>
<proteinExistence type="inferred from homology"/>
<protein>
    <recommendedName>
        <fullName>Single-pass membrane and coiled-coil domain-containing protein 4</fullName>
    </recommendedName>
</protein>